<dbReference type="EC" id="1.1.1.25" evidence="1"/>
<dbReference type="EMBL" id="CP001393">
    <property type="protein sequence ID" value="ACM60977.1"/>
    <property type="molecule type" value="Genomic_DNA"/>
</dbReference>
<dbReference type="RefSeq" id="WP_015908271.1">
    <property type="nucleotide sequence ID" value="NC_012034.1"/>
</dbReference>
<dbReference type="SMR" id="B9MKW9"/>
<dbReference type="STRING" id="521460.Athe_1889"/>
<dbReference type="GeneID" id="31773239"/>
<dbReference type="KEGG" id="ate:Athe_1889"/>
<dbReference type="eggNOG" id="COG0169">
    <property type="taxonomic scope" value="Bacteria"/>
</dbReference>
<dbReference type="HOGENOM" id="CLU_044063_4_1_9"/>
<dbReference type="UniPathway" id="UPA00053">
    <property type="reaction ID" value="UER00087"/>
</dbReference>
<dbReference type="Proteomes" id="UP000007723">
    <property type="component" value="Chromosome"/>
</dbReference>
<dbReference type="GO" id="GO:0005829">
    <property type="term" value="C:cytosol"/>
    <property type="evidence" value="ECO:0007669"/>
    <property type="project" value="TreeGrafter"/>
</dbReference>
<dbReference type="GO" id="GO:0050661">
    <property type="term" value="F:NADP binding"/>
    <property type="evidence" value="ECO:0007669"/>
    <property type="project" value="InterPro"/>
</dbReference>
<dbReference type="GO" id="GO:0004764">
    <property type="term" value="F:shikimate 3-dehydrogenase (NADP+) activity"/>
    <property type="evidence" value="ECO:0007669"/>
    <property type="project" value="UniProtKB-UniRule"/>
</dbReference>
<dbReference type="GO" id="GO:0008652">
    <property type="term" value="P:amino acid biosynthetic process"/>
    <property type="evidence" value="ECO:0007669"/>
    <property type="project" value="UniProtKB-KW"/>
</dbReference>
<dbReference type="GO" id="GO:0009073">
    <property type="term" value="P:aromatic amino acid family biosynthetic process"/>
    <property type="evidence" value="ECO:0007669"/>
    <property type="project" value="UniProtKB-KW"/>
</dbReference>
<dbReference type="GO" id="GO:0009423">
    <property type="term" value="P:chorismate biosynthetic process"/>
    <property type="evidence" value="ECO:0007669"/>
    <property type="project" value="UniProtKB-UniRule"/>
</dbReference>
<dbReference type="GO" id="GO:0019632">
    <property type="term" value="P:shikimate metabolic process"/>
    <property type="evidence" value="ECO:0007669"/>
    <property type="project" value="InterPro"/>
</dbReference>
<dbReference type="CDD" id="cd01065">
    <property type="entry name" value="NAD_bind_Shikimate_DH"/>
    <property type="match status" value="1"/>
</dbReference>
<dbReference type="Gene3D" id="3.40.50.10860">
    <property type="entry name" value="Leucine Dehydrogenase, chain A, domain 1"/>
    <property type="match status" value="1"/>
</dbReference>
<dbReference type="Gene3D" id="3.40.50.720">
    <property type="entry name" value="NAD(P)-binding Rossmann-like Domain"/>
    <property type="match status" value="1"/>
</dbReference>
<dbReference type="HAMAP" id="MF_00222">
    <property type="entry name" value="Shikimate_DH_AroE"/>
    <property type="match status" value="1"/>
</dbReference>
<dbReference type="InterPro" id="IPR046346">
    <property type="entry name" value="Aminoacid_DH-like_N_sf"/>
</dbReference>
<dbReference type="InterPro" id="IPR036291">
    <property type="entry name" value="NAD(P)-bd_dom_sf"/>
</dbReference>
<dbReference type="InterPro" id="IPR011342">
    <property type="entry name" value="Shikimate_DH"/>
</dbReference>
<dbReference type="InterPro" id="IPR013708">
    <property type="entry name" value="Shikimate_DH-bd_N"/>
</dbReference>
<dbReference type="InterPro" id="IPR022893">
    <property type="entry name" value="Shikimate_DH_fam"/>
</dbReference>
<dbReference type="InterPro" id="IPR006151">
    <property type="entry name" value="Shikm_DH/Glu-tRNA_Rdtase"/>
</dbReference>
<dbReference type="NCBIfam" id="TIGR00507">
    <property type="entry name" value="aroE"/>
    <property type="match status" value="1"/>
</dbReference>
<dbReference type="PANTHER" id="PTHR21089:SF1">
    <property type="entry name" value="BIFUNCTIONAL 3-DEHYDROQUINATE DEHYDRATASE_SHIKIMATE DEHYDROGENASE, CHLOROPLASTIC"/>
    <property type="match status" value="1"/>
</dbReference>
<dbReference type="PANTHER" id="PTHR21089">
    <property type="entry name" value="SHIKIMATE DEHYDROGENASE"/>
    <property type="match status" value="1"/>
</dbReference>
<dbReference type="Pfam" id="PF01488">
    <property type="entry name" value="Shikimate_DH"/>
    <property type="match status" value="1"/>
</dbReference>
<dbReference type="Pfam" id="PF08501">
    <property type="entry name" value="Shikimate_dh_N"/>
    <property type="match status" value="1"/>
</dbReference>
<dbReference type="SUPFAM" id="SSF53223">
    <property type="entry name" value="Aminoacid dehydrogenase-like, N-terminal domain"/>
    <property type="match status" value="1"/>
</dbReference>
<dbReference type="SUPFAM" id="SSF51735">
    <property type="entry name" value="NAD(P)-binding Rossmann-fold domains"/>
    <property type="match status" value="1"/>
</dbReference>
<keyword id="KW-0028">Amino-acid biosynthesis</keyword>
<keyword id="KW-0057">Aromatic amino acid biosynthesis</keyword>
<keyword id="KW-0521">NADP</keyword>
<keyword id="KW-0560">Oxidoreductase</keyword>
<reference key="1">
    <citation type="submission" date="2009-01" db="EMBL/GenBank/DDBJ databases">
        <title>Complete sequence of chromosome of Caldicellulosiruptor becscii DSM 6725.</title>
        <authorList>
            <person name="Lucas S."/>
            <person name="Copeland A."/>
            <person name="Lapidus A."/>
            <person name="Glavina del Rio T."/>
            <person name="Tice H."/>
            <person name="Bruce D."/>
            <person name="Goodwin L."/>
            <person name="Pitluck S."/>
            <person name="Sims D."/>
            <person name="Meincke L."/>
            <person name="Brettin T."/>
            <person name="Detter J.C."/>
            <person name="Han C."/>
            <person name="Larimer F."/>
            <person name="Land M."/>
            <person name="Hauser L."/>
            <person name="Kyrpides N."/>
            <person name="Ovchinnikova G."/>
            <person name="Kataeva I."/>
            <person name="Adams M.W.W."/>
        </authorList>
    </citation>
    <scope>NUCLEOTIDE SEQUENCE [LARGE SCALE GENOMIC DNA]</scope>
    <source>
        <strain>ATCC BAA-1888 / DSM 6725 / KCTC 15123 / Z-1320</strain>
    </source>
</reference>
<gene>
    <name evidence="1" type="primary">aroE</name>
    <name type="ordered locus">Athe_1889</name>
</gene>
<evidence type="ECO:0000255" key="1">
    <source>
        <dbReference type="HAMAP-Rule" id="MF_00222"/>
    </source>
</evidence>
<name>AROE_CALBD</name>
<feature type="chain" id="PRO_1000124870" description="Shikimate dehydrogenase (NADP(+))">
    <location>
        <begin position="1"/>
        <end position="288"/>
    </location>
</feature>
<feature type="active site" description="Proton acceptor" evidence="1">
    <location>
        <position position="67"/>
    </location>
</feature>
<feature type="binding site" evidence="1">
    <location>
        <begin position="14"/>
        <end position="16"/>
    </location>
    <ligand>
        <name>shikimate</name>
        <dbReference type="ChEBI" id="CHEBI:36208"/>
    </ligand>
</feature>
<feature type="binding site" evidence="1">
    <location>
        <position position="63"/>
    </location>
    <ligand>
        <name>shikimate</name>
        <dbReference type="ChEBI" id="CHEBI:36208"/>
    </ligand>
</feature>
<feature type="binding site" evidence="1">
    <location>
        <position position="79"/>
    </location>
    <ligand>
        <name>NADP(+)</name>
        <dbReference type="ChEBI" id="CHEBI:58349"/>
    </ligand>
</feature>
<feature type="binding site" evidence="1">
    <location>
        <position position="88"/>
    </location>
    <ligand>
        <name>shikimate</name>
        <dbReference type="ChEBI" id="CHEBI:36208"/>
    </ligand>
</feature>
<feature type="binding site" evidence="1">
    <location>
        <position position="103"/>
    </location>
    <ligand>
        <name>shikimate</name>
        <dbReference type="ChEBI" id="CHEBI:36208"/>
    </ligand>
</feature>
<feature type="binding site" evidence="1">
    <location>
        <begin position="127"/>
        <end position="131"/>
    </location>
    <ligand>
        <name>NADP(+)</name>
        <dbReference type="ChEBI" id="CHEBI:58349"/>
    </ligand>
</feature>
<feature type="binding site" evidence="1">
    <location>
        <begin position="151"/>
        <end position="156"/>
    </location>
    <ligand>
        <name>NADP(+)</name>
        <dbReference type="ChEBI" id="CHEBI:58349"/>
    </ligand>
</feature>
<feature type="binding site" evidence="1">
    <location>
        <position position="219"/>
    </location>
    <ligand>
        <name>NADP(+)</name>
        <dbReference type="ChEBI" id="CHEBI:58349"/>
    </ligand>
</feature>
<feature type="binding site" evidence="1">
    <location>
        <position position="221"/>
    </location>
    <ligand>
        <name>shikimate</name>
        <dbReference type="ChEBI" id="CHEBI:36208"/>
    </ligand>
</feature>
<feature type="binding site" evidence="1">
    <location>
        <position position="242"/>
    </location>
    <ligand>
        <name>NADP(+)</name>
        <dbReference type="ChEBI" id="CHEBI:58349"/>
    </ligand>
</feature>
<proteinExistence type="inferred from homology"/>
<sequence>MKKLFLIGKSLKHSISPFIHNRILSEFDIDAIYSNLELLDTEMLKEFVEMVRKDEDVVGFNITIPYKEDILEFCDEVSEDVRIIKAANTVKKEDGKLLAYNTDWIGFKRSLEDRGVDVKDKKILVLGSGGAAKACIYGLYRMGAKEVFVANRTYEKAEKLKEVFQDILKILPVEWLRRYEFKYDIIINTTSVGMFPNIESSPFDFENYVAGVPVFVYDMIYNPLKTAFLKEAEKKGIKIENGLKMLVYQAIEAEMIWFDIVNLSPNFLLEILNDTEKNFGLGIYKVIG</sequence>
<protein>
    <recommendedName>
        <fullName evidence="1">Shikimate dehydrogenase (NADP(+))</fullName>
        <shortName evidence="1">SDH</shortName>
        <ecNumber evidence="1">1.1.1.25</ecNumber>
    </recommendedName>
</protein>
<organism>
    <name type="scientific">Caldicellulosiruptor bescii (strain ATCC BAA-1888 / DSM 6725 / KCTC 15123 / Z-1320)</name>
    <name type="common">Anaerocellum thermophilum</name>
    <dbReference type="NCBI Taxonomy" id="521460"/>
    <lineage>
        <taxon>Bacteria</taxon>
        <taxon>Bacillati</taxon>
        <taxon>Bacillota</taxon>
        <taxon>Bacillota incertae sedis</taxon>
        <taxon>Caldicellulosiruptorales</taxon>
        <taxon>Caldicellulosiruptoraceae</taxon>
        <taxon>Caldicellulosiruptor</taxon>
    </lineage>
</organism>
<comment type="function">
    <text evidence="1">Involved in the biosynthesis of the chorismate, which leads to the biosynthesis of aromatic amino acids. Catalyzes the reversible NADPH linked reduction of 3-dehydroshikimate (DHSA) to yield shikimate (SA).</text>
</comment>
<comment type="catalytic activity">
    <reaction evidence="1">
        <text>shikimate + NADP(+) = 3-dehydroshikimate + NADPH + H(+)</text>
        <dbReference type="Rhea" id="RHEA:17737"/>
        <dbReference type="ChEBI" id="CHEBI:15378"/>
        <dbReference type="ChEBI" id="CHEBI:16630"/>
        <dbReference type="ChEBI" id="CHEBI:36208"/>
        <dbReference type="ChEBI" id="CHEBI:57783"/>
        <dbReference type="ChEBI" id="CHEBI:58349"/>
        <dbReference type="EC" id="1.1.1.25"/>
    </reaction>
</comment>
<comment type="pathway">
    <text evidence="1">Metabolic intermediate biosynthesis; chorismate biosynthesis; chorismate from D-erythrose 4-phosphate and phosphoenolpyruvate: step 4/7.</text>
</comment>
<comment type="subunit">
    <text evidence="1">Homodimer.</text>
</comment>
<comment type="similarity">
    <text evidence="1">Belongs to the shikimate dehydrogenase family.</text>
</comment>
<accession>B9MKW9</accession>